<name>TRMD_PSEE4</name>
<reference key="1">
    <citation type="journal article" date="2006" name="Nat. Biotechnol.">
        <title>Complete genome sequence of the entomopathogenic and metabolically versatile soil bacterium Pseudomonas entomophila.</title>
        <authorList>
            <person name="Vodovar N."/>
            <person name="Vallenet D."/>
            <person name="Cruveiller S."/>
            <person name="Rouy Z."/>
            <person name="Barbe V."/>
            <person name="Acosta C."/>
            <person name="Cattolico L."/>
            <person name="Jubin C."/>
            <person name="Lajus A."/>
            <person name="Segurens B."/>
            <person name="Vacherie B."/>
            <person name="Wincker P."/>
            <person name="Weissenbach J."/>
            <person name="Lemaitre B."/>
            <person name="Medigue C."/>
            <person name="Boccard F."/>
        </authorList>
    </citation>
    <scope>NUCLEOTIDE SEQUENCE [LARGE SCALE GENOMIC DNA]</scope>
    <source>
        <strain>L48</strain>
    </source>
</reference>
<sequence>MDTLRVEVVTLFPEMFSAITEYGITSRAVKQGLLQVTCWNPRDYTTDRHHTVDDRPFGGGPGMVMKIKPLEDALASARQATGAAAKVIYLSPQGRKLTQQAVKGLAEQESLILIAGRYEGIDERFIEAHVDEEWSIGDYVLSGGELPAMVLIDAVTRLLPGALGHVDSAEEDSFTDGLLDCPHYTRPEVYADQRVPDVLLSGNHAHIRRWRMKQSLGRTFERRADLLESRSLSGEEKKLLEEYLRERDDS</sequence>
<gene>
    <name evidence="1" type="primary">trmD</name>
    <name type="ordered locus">PSEEN4258</name>
</gene>
<keyword id="KW-0963">Cytoplasm</keyword>
<keyword id="KW-0489">Methyltransferase</keyword>
<keyword id="KW-0949">S-adenosyl-L-methionine</keyword>
<keyword id="KW-0808">Transferase</keyword>
<keyword id="KW-0819">tRNA processing</keyword>
<feature type="chain" id="PRO_1000006504" description="tRNA (guanine-N(1)-)-methyltransferase">
    <location>
        <begin position="1"/>
        <end position="250"/>
    </location>
</feature>
<feature type="binding site" evidence="1">
    <location>
        <position position="116"/>
    </location>
    <ligand>
        <name>S-adenosyl-L-methionine</name>
        <dbReference type="ChEBI" id="CHEBI:59789"/>
    </ligand>
</feature>
<feature type="binding site" evidence="1">
    <location>
        <begin position="136"/>
        <end position="141"/>
    </location>
    <ligand>
        <name>S-adenosyl-L-methionine</name>
        <dbReference type="ChEBI" id="CHEBI:59789"/>
    </ligand>
</feature>
<dbReference type="EC" id="2.1.1.228" evidence="1"/>
<dbReference type="EMBL" id="CT573326">
    <property type="protein sequence ID" value="CAK16945.1"/>
    <property type="molecule type" value="Genomic_DNA"/>
</dbReference>
<dbReference type="RefSeq" id="WP_011535316.1">
    <property type="nucleotide sequence ID" value="NC_008027.1"/>
</dbReference>
<dbReference type="SMR" id="Q1I5Z0"/>
<dbReference type="STRING" id="384676.PSEEN4258"/>
<dbReference type="GeneID" id="32807263"/>
<dbReference type="KEGG" id="pen:PSEEN4258"/>
<dbReference type="eggNOG" id="COG0336">
    <property type="taxonomic scope" value="Bacteria"/>
</dbReference>
<dbReference type="HOGENOM" id="CLU_047363_0_2_6"/>
<dbReference type="OrthoDB" id="9807416at2"/>
<dbReference type="Proteomes" id="UP000000658">
    <property type="component" value="Chromosome"/>
</dbReference>
<dbReference type="GO" id="GO:0005829">
    <property type="term" value="C:cytosol"/>
    <property type="evidence" value="ECO:0007669"/>
    <property type="project" value="TreeGrafter"/>
</dbReference>
<dbReference type="GO" id="GO:0052906">
    <property type="term" value="F:tRNA (guanine(37)-N1)-methyltransferase activity"/>
    <property type="evidence" value="ECO:0007669"/>
    <property type="project" value="UniProtKB-UniRule"/>
</dbReference>
<dbReference type="GO" id="GO:0002939">
    <property type="term" value="P:tRNA N1-guanine methylation"/>
    <property type="evidence" value="ECO:0007669"/>
    <property type="project" value="TreeGrafter"/>
</dbReference>
<dbReference type="CDD" id="cd18080">
    <property type="entry name" value="TrmD-like"/>
    <property type="match status" value="1"/>
</dbReference>
<dbReference type="FunFam" id="1.10.1270.20:FF:000001">
    <property type="entry name" value="tRNA (guanine-N(1)-)-methyltransferase"/>
    <property type="match status" value="1"/>
</dbReference>
<dbReference type="FunFam" id="3.40.1280.10:FF:000001">
    <property type="entry name" value="tRNA (guanine-N(1)-)-methyltransferase"/>
    <property type="match status" value="1"/>
</dbReference>
<dbReference type="Gene3D" id="3.40.1280.10">
    <property type="match status" value="1"/>
</dbReference>
<dbReference type="Gene3D" id="1.10.1270.20">
    <property type="entry name" value="tRNA(m1g37)methyltransferase, domain 2"/>
    <property type="match status" value="1"/>
</dbReference>
<dbReference type="HAMAP" id="MF_00605">
    <property type="entry name" value="TrmD"/>
    <property type="match status" value="1"/>
</dbReference>
<dbReference type="InterPro" id="IPR029028">
    <property type="entry name" value="Alpha/beta_knot_MTases"/>
</dbReference>
<dbReference type="InterPro" id="IPR023148">
    <property type="entry name" value="tRNA_m1G_MeTrfase_C_sf"/>
</dbReference>
<dbReference type="InterPro" id="IPR002649">
    <property type="entry name" value="tRNA_m1G_MeTrfase_TrmD"/>
</dbReference>
<dbReference type="InterPro" id="IPR029026">
    <property type="entry name" value="tRNA_m1G_MTases_N"/>
</dbReference>
<dbReference type="InterPro" id="IPR016009">
    <property type="entry name" value="tRNA_MeTrfase_TRMD/TRM10"/>
</dbReference>
<dbReference type="NCBIfam" id="NF000648">
    <property type="entry name" value="PRK00026.1"/>
    <property type="match status" value="1"/>
</dbReference>
<dbReference type="NCBIfam" id="TIGR00088">
    <property type="entry name" value="trmD"/>
    <property type="match status" value="1"/>
</dbReference>
<dbReference type="PANTHER" id="PTHR46417">
    <property type="entry name" value="TRNA (GUANINE-N(1)-)-METHYLTRANSFERASE"/>
    <property type="match status" value="1"/>
</dbReference>
<dbReference type="PANTHER" id="PTHR46417:SF1">
    <property type="entry name" value="TRNA (GUANINE-N(1)-)-METHYLTRANSFERASE"/>
    <property type="match status" value="1"/>
</dbReference>
<dbReference type="Pfam" id="PF01746">
    <property type="entry name" value="tRNA_m1G_MT"/>
    <property type="match status" value="1"/>
</dbReference>
<dbReference type="PIRSF" id="PIRSF000386">
    <property type="entry name" value="tRNA_mtase"/>
    <property type="match status" value="1"/>
</dbReference>
<dbReference type="SUPFAM" id="SSF75217">
    <property type="entry name" value="alpha/beta knot"/>
    <property type="match status" value="1"/>
</dbReference>
<protein>
    <recommendedName>
        <fullName evidence="1">tRNA (guanine-N(1)-)-methyltransferase</fullName>
        <ecNumber evidence="1">2.1.1.228</ecNumber>
    </recommendedName>
    <alternativeName>
        <fullName evidence="1">M1G-methyltransferase</fullName>
    </alternativeName>
    <alternativeName>
        <fullName evidence="1">tRNA [GM37] methyltransferase</fullName>
    </alternativeName>
</protein>
<proteinExistence type="inferred from homology"/>
<organism>
    <name type="scientific">Pseudomonas entomophila (strain L48)</name>
    <dbReference type="NCBI Taxonomy" id="384676"/>
    <lineage>
        <taxon>Bacteria</taxon>
        <taxon>Pseudomonadati</taxon>
        <taxon>Pseudomonadota</taxon>
        <taxon>Gammaproteobacteria</taxon>
        <taxon>Pseudomonadales</taxon>
        <taxon>Pseudomonadaceae</taxon>
        <taxon>Pseudomonas</taxon>
    </lineage>
</organism>
<accession>Q1I5Z0</accession>
<evidence type="ECO:0000255" key="1">
    <source>
        <dbReference type="HAMAP-Rule" id="MF_00605"/>
    </source>
</evidence>
<comment type="function">
    <text evidence="1">Specifically methylates guanosine-37 in various tRNAs.</text>
</comment>
<comment type="catalytic activity">
    <reaction evidence="1">
        <text>guanosine(37) in tRNA + S-adenosyl-L-methionine = N(1)-methylguanosine(37) in tRNA + S-adenosyl-L-homocysteine + H(+)</text>
        <dbReference type="Rhea" id="RHEA:36899"/>
        <dbReference type="Rhea" id="RHEA-COMP:10145"/>
        <dbReference type="Rhea" id="RHEA-COMP:10147"/>
        <dbReference type="ChEBI" id="CHEBI:15378"/>
        <dbReference type="ChEBI" id="CHEBI:57856"/>
        <dbReference type="ChEBI" id="CHEBI:59789"/>
        <dbReference type="ChEBI" id="CHEBI:73542"/>
        <dbReference type="ChEBI" id="CHEBI:74269"/>
        <dbReference type="EC" id="2.1.1.228"/>
    </reaction>
</comment>
<comment type="subunit">
    <text evidence="1">Homodimer.</text>
</comment>
<comment type="subcellular location">
    <subcellularLocation>
        <location evidence="1">Cytoplasm</location>
    </subcellularLocation>
</comment>
<comment type="similarity">
    <text evidence="1">Belongs to the RNA methyltransferase TrmD family.</text>
</comment>